<sequence length="169" mass="18578">NSSYRIISIGRGALGGDVYLGKSPNSDAPCPDGVFRYNSDVGPSGTPVRFIPLSTNIFEDQLLNIQFNIPTVKLCVSYTIWKVGNLNAYFRTMLLETGGTIGQADNSYFKIVKSSKIGYNLLSCPFTSIICLRCPEDQFCAKVGVVIQNGKRRLALVNENPLDVLFQEV</sequence>
<reference key="1">
    <citation type="journal article" date="1997" name="Phytochemistry">
        <title>Jasmonic acid inducible aspartic proteinase inhibitors from potato.</title>
        <authorList>
            <person name="Kreft S."/>
            <person name="Ravnikar M."/>
            <person name="Mesko P."/>
            <person name="Pungercar J."/>
            <person name="Umek A."/>
            <person name="Kregar I."/>
            <person name="Strukelj B."/>
        </authorList>
    </citation>
    <scope>NUCLEOTIDE SEQUENCE</scope>
    <source>
        <strain>cv. Desiree</strain>
    </source>
</reference>
<feature type="chain" id="PRO_0000083310" description="Aspartic protease inhibitor 3">
    <location>
        <begin position="1" status="less than"/>
        <end position="169"/>
    </location>
</feature>
<feature type="site" description="Reactive bond for trypsin" evidence="1">
    <location>
        <begin position="49"/>
        <end position="50"/>
    </location>
</feature>
<feature type="site" description="Reactive bond for chymotrypsin" evidence="1">
    <location>
        <begin position="93"/>
        <end position="94"/>
    </location>
</feature>
<feature type="glycosylation site" description="N-linked (GlcNAc...) asparagine" evidence="2">
    <location>
        <position position="1"/>
    </location>
</feature>
<feature type="disulfide bond" evidence="1">
    <location>
        <begin position="30"/>
        <end position="75"/>
    </location>
</feature>
<feature type="disulfide bond" evidence="1">
    <location>
        <begin position="124"/>
        <end position="134"/>
    </location>
</feature>
<feature type="non-terminal residue">
    <location>
        <position position="1"/>
    </location>
</feature>
<protein>
    <recommendedName>
        <fullName>Aspartic protease inhibitor 3</fullName>
        <shortName>API-3</shortName>
    </recommendedName>
</protein>
<evidence type="ECO:0000250" key="1"/>
<evidence type="ECO:0000255" key="2"/>
<evidence type="ECO:0000305" key="3"/>
<name>API3_SOLTU</name>
<comment type="function">
    <text>Inhibitor of cathepsin D (aspartic protease). May also inhibit trypsin and chymotrypsin (serine proteases). Protects the plant by inhibiting proteases of invading organisms.</text>
</comment>
<comment type="subcellular location">
    <subcellularLocation>
        <location evidence="1">Vacuole</location>
    </subcellularLocation>
</comment>
<comment type="induction">
    <text>By jasmonate.</text>
</comment>
<comment type="similarity">
    <text evidence="3">Belongs to the protease inhibitor I3 (leguminous Kunitz-type inhibitor) family.</text>
</comment>
<keyword id="KW-0062">Aspartic protease inhibitor</keyword>
<keyword id="KW-1015">Disulfide bond</keyword>
<keyword id="KW-0325">Glycoprotein</keyword>
<keyword id="KW-0646">Protease inhibitor</keyword>
<keyword id="KW-1185">Reference proteome</keyword>
<keyword id="KW-0722">Serine protease inhibitor</keyword>
<keyword id="KW-0926">Vacuole</keyword>
<accession>P58518</accession>
<dbReference type="SMR" id="P58518"/>
<dbReference type="STRING" id="4113.P58518"/>
<dbReference type="ProMEX" id="P58518"/>
<dbReference type="InParanoid" id="P58518"/>
<dbReference type="Proteomes" id="UP000011115">
    <property type="component" value="Unassembled WGS sequence"/>
</dbReference>
<dbReference type="ExpressionAtlas" id="P58518">
    <property type="expression patterns" value="baseline and differential"/>
</dbReference>
<dbReference type="GO" id="GO:0005773">
    <property type="term" value="C:vacuole"/>
    <property type="evidence" value="ECO:0007669"/>
    <property type="project" value="UniProtKB-SubCell"/>
</dbReference>
<dbReference type="GO" id="GO:0019828">
    <property type="term" value="F:aspartic-type endopeptidase inhibitor activity"/>
    <property type="evidence" value="ECO:0007669"/>
    <property type="project" value="UniProtKB-KW"/>
</dbReference>
<dbReference type="GO" id="GO:0004867">
    <property type="term" value="F:serine-type endopeptidase inhibitor activity"/>
    <property type="evidence" value="ECO:0007669"/>
    <property type="project" value="UniProtKB-KW"/>
</dbReference>
<dbReference type="CDD" id="cd23372">
    <property type="entry name" value="beta-trefoil_STI_CPI-like"/>
    <property type="match status" value="1"/>
</dbReference>
<dbReference type="Gene3D" id="2.80.10.50">
    <property type="match status" value="1"/>
</dbReference>
<dbReference type="InterPro" id="IPR011065">
    <property type="entry name" value="Kunitz_inhibitor_STI-like_sf"/>
</dbReference>
<dbReference type="InterPro" id="IPR002160">
    <property type="entry name" value="Prot_inh_Kunz-lg"/>
</dbReference>
<dbReference type="PANTHER" id="PTHR33107">
    <property type="entry name" value="KUNITZ TRYPSIN INHIBITOR 2"/>
    <property type="match status" value="1"/>
</dbReference>
<dbReference type="PANTHER" id="PTHR33107:SF38">
    <property type="entry name" value="SERINE PROTEASE INHIBITOR 5"/>
    <property type="match status" value="1"/>
</dbReference>
<dbReference type="Pfam" id="PF00197">
    <property type="entry name" value="Kunitz_legume"/>
    <property type="match status" value="1"/>
</dbReference>
<dbReference type="PRINTS" id="PR00291">
    <property type="entry name" value="KUNITZINHBTR"/>
</dbReference>
<dbReference type="SMART" id="SM00452">
    <property type="entry name" value="STI"/>
    <property type="match status" value="1"/>
</dbReference>
<dbReference type="SUPFAM" id="SSF50386">
    <property type="entry name" value="STI-like"/>
    <property type="match status" value="1"/>
</dbReference>
<organism>
    <name type="scientific">Solanum tuberosum</name>
    <name type="common">Potato</name>
    <dbReference type="NCBI Taxonomy" id="4113"/>
    <lineage>
        <taxon>Eukaryota</taxon>
        <taxon>Viridiplantae</taxon>
        <taxon>Streptophyta</taxon>
        <taxon>Embryophyta</taxon>
        <taxon>Tracheophyta</taxon>
        <taxon>Spermatophyta</taxon>
        <taxon>Magnoliopsida</taxon>
        <taxon>eudicotyledons</taxon>
        <taxon>Gunneridae</taxon>
        <taxon>Pentapetalae</taxon>
        <taxon>asterids</taxon>
        <taxon>lamiids</taxon>
        <taxon>Solanales</taxon>
        <taxon>Solanaceae</taxon>
        <taxon>Solanoideae</taxon>
        <taxon>Solaneae</taxon>
        <taxon>Solanum</taxon>
    </lineage>
</organism>
<proteinExistence type="evidence at transcript level"/>